<proteinExistence type="inferred from homology"/>
<accession>Q608K2</accession>
<protein>
    <recommendedName>
        <fullName evidence="1">Sec-independent protein translocase protein TatA</fullName>
    </recommendedName>
</protein>
<keyword id="KW-0997">Cell inner membrane</keyword>
<keyword id="KW-1003">Cell membrane</keyword>
<keyword id="KW-0472">Membrane</keyword>
<keyword id="KW-0653">Protein transport</keyword>
<keyword id="KW-1185">Reference proteome</keyword>
<keyword id="KW-0811">Translocation</keyword>
<keyword id="KW-0812">Transmembrane</keyword>
<keyword id="KW-1133">Transmembrane helix</keyword>
<keyword id="KW-0813">Transport</keyword>
<feature type="chain" id="PRO_1000071815" description="Sec-independent protein translocase protein TatA">
    <location>
        <begin position="1"/>
        <end position="70"/>
    </location>
</feature>
<feature type="transmembrane region" description="Helical" evidence="1">
    <location>
        <begin position="1"/>
        <end position="21"/>
    </location>
</feature>
<feature type="region of interest" description="Disordered" evidence="2">
    <location>
        <begin position="42"/>
        <end position="70"/>
    </location>
</feature>
<feature type="compositionally biased region" description="Basic and acidic residues" evidence="2">
    <location>
        <begin position="57"/>
        <end position="70"/>
    </location>
</feature>
<dbReference type="EMBL" id="AE017282">
    <property type="protein sequence ID" value="AAU92487.1"/>
    <property type="molecule type" value="Genomic_DNA"/>
</dbReference>
<dbReference type="RefSeq" id="WP_010960764.1">
    <property type="nucleotide sequence ID" value="NC_002977.6"/>
</dbReference>
<dbReference type="SMR" id="Q608K2"/>
<dbReference type="STRING" id="243233.MCA1488"/>
<dbReference type="GeneID" id="88223760"/>
<dbReference type="KEGG" id="mca:MCA1488"/>
<dbReference type="eggNOG" id="COG1826">
    <property type="taxonomic scope" value="Bacteria"/>
</dbReference>
<dbReference type="HOGENOM" id="CLU_086034_5_3_6"/>
<dbReference type="Proteomes" id="UP000006821">
    <property type="component" value="Chromosome"/>
</dbReference>
<dbReference type="GO" id="GO:0033281">
    <property type="term" value="C:TAT protein transport complex"/>
    <property type="evidence" value="ECO:0007669"/>
    <property type="project" value="UniProtKB-UniRule"/>
</dbReference>
<dbReference type="GO" id="GO:0008320">
    <property type="term" value="F:protein transmembrane transporter activity"/>
    <property type="evidence" value="ECO:0007669"/>
    <property type="project" value="UniProtKB-UniRule"/>
</dbReference>
<dbReference type="GO" id="GO:0043953">
    <property type="term" value="P:protein transport by the Tat complex"/>
    <property type="evidence" value="ECO:0007669"/>
    <property type="project" value="UniProtKB-UniRule"/>
</dbReference>
<dbReference type="Gene3D" id="1.20.5.3310">
    <property type="match status" value="1"/>
</dbReference>
<dbReference type="HAMAP" id="MF_00236">
    <property type="entry name" value="TatA_E"/>
    <property type="match status" value="1"/>
</dbReference>
<dbReference type="InterPro" id="IPR003369">
    <property type="entry name" value="TatA/B/E"/>
</dbReference>
<dbReference type="InterPro" id="IPR006312">
    <property type="entry name" value="TatA/E"/>
</dbReference>
<dbReference type="NCBIfam" id="TIGR01411">
    <property type="entry name" value="tatAE"/>
    <property type="match status" value="1"/>
</dbReference>
<dbReference type="PANTHER" id="PTHR42982">
    <property type="entry name" value="SEC-INDEPENDENT PROTEIN TRANSLOCASE PROTEIN TATA"/>
    <property type="match status" value="1"/>
</dbReference>
<dbReference type="PANTHER" id="PTHR42982:SF1">
    <property type="entry name" value="SEC-INDEPENDENT PROTEIN TRANSLOCASE PROTEIN TATA"/>
    <property type="match status" value="1"/>
</dbReference>
<dbReference type="Pfam" id="PF02416">
    <property type="entry name" value="TatA_B_E"/>
    <property type="match status" value="1"/>
</dbReference>
<evidence type="ECO:0000255" key="1">
    <source>
        <dbReference type="HAMAP-Rule" id="MF_00236"/>
    </source>
</evidence>
<evidence type="ECO:0000256" key="2">
    <source>
        <dbReference type="SAM" id="MobiDB-lite"/>
    </source>
</evidence>
<sequence length="70" mass="7660">MGIGVWELLLLFLIVLVVFGTKRLRNIGGDLGGAIKSFRQAMSENEDKPSEGGARTLEGEVVDKKEKDKV</sequence>
<name>TATA_METCA</name>
<reference key="1">
    <citation type="journal article" date="2004" name="PLoS Biol.">
        <title>Genomic insights into methanotrophy: the complete genome sequence of Methylococcus capsulatus (Bath).</title>
        <authorList>
            <person name="Ward N.L."/>
            <person name="Larsen O."/>
            <person name="Sakwa J."/>
            <person name="Bruseth L."/>
            <person name="Khouri H.M."/>
            <person name="Durkin A.S."/>
            <person name="Dimitrov G."/>
            <person name="Jiang L."/>
            <person name="Scanlan D."/>
            <person name="Kang K.H."/>
            <person name="Lewis M.R."/>
            <person name="Nelson K.E."/>
            <person name="Methe B.A."/>
            <person name="Wu M."/>
            <person name="Heidelberg J.F."/>
            <person name="Paulsen I.T."/>
            <person name="Fouts D.E."/>
            <person name="Ravel J."/>
            <person name="Tettelin H."/>
            <person name="Ren Q."/>
            <person name="Read T.D."/>
            <person name="DeBoy R.T."/>
            <person name="Seshadri R."/>
            <person name="Salzberg S.L."/>
            <person name="Jensen H.B."/>
            <person name="Birkeland N.K."/>
            <person name="Nelson W.C."/>
            <person name="Dodson R.J."/>
            <person name="Grindhaug S.H."/>
            <person name="Holt I.E."/>
            <person name="Eidhammer I."/>
            <person name="Jonasen I."/>
            <person name="Vanaken S."/>
            <person name="Utterback T.R."/>
            <person name="Feldblyum T.V."/>
            <person name="Fraser C.M."/>
            <person name="Lillehaug J.R."/>
            <person name="Eisen J.A."/>
        </authorList>
    </citation>
    <scope>NUCLEOTIDE SEQUENCE [LARGE SCALE GENOMIC DNA]</scope>
    <source>
        <strain>ATCC 33009 / NCIMB 11132 / Bath</strain>
    </source>
</reference>
<comment type="function">
    <text evidence="1">Part of the twin-arginine translocation (Tat) system that transports large folded proteins containing a characteristic twin-arginine motif in their signal peptide across membranes. TatA could form the protein-conducting channel of the Tat system.</text>
</comment>
<comment type="subunit">
    <text evidence="1">The Tat system comprises two distinct complexes: a TatABC complex, containing multiple copies of TatA, TatB and TatC subunits, and a separate TatA complex, containing only TatA subunits. Substrates initially bind to the TatABC complex, which probably triggers association of the separate TatA complex to form the active translocon.</text>
</comment>
<comment type="subcellular location">
    <subcellularLocation>
        <location evidence="1">Cell inner membrane</location>
        <topology evidence="1">Single-pass membrane protein</topology>
    </subcellularLocation>
</comment>
<comment type="similarity">
    <text evidence="1">Belongs to the TatA/E family.</text>
</comment>
<gene>
    <name evidence="1" type="primary">tatA</name>
    <name type="ordered locus">MCA1488</name>
</gene>
<organism>
    <name type="scientific">Methylococcus capsulatus (strain ATCC 33009 / NCIMB 11132 / Bath)</name>
    <dbReference type="NCBI Taxonomy" id="243233"/>
    <lineage>
        <taxon>Bacteria</taxon>
        <taxon>Pseudomonadati</taxon>
        <taxon>Pseudomonadota</taxon>
        <taxon>Gammaproteobacteria</taxon>
        <taxon>Methylococcales</taxon>
        <taxon>Methylococcaceae</taxon>
        <taxon>Methylococcus</taxon>
    </lineage>
</organism>